<reference key="1">
    <citation type="journal article" date="1995" name="Science">
        <title>Whole-genome random sequencing and assembly of Haemophilus influenzae Rd.</title>
        <authorList>
            <person name="Fleischmann R.D."/>
            <person name="Adams M.D."/>
            <person name="White O."/>
            <person name="Clayton R.A."/>
            <person name="Kirkness E.F."/>
            <person name="Kerlavage A.R."/>
            <person name="Bult C.J."/>
            <person name="Tomb J.-F."/>
            <person name="Dougherty B.A."/>
            <person name="Merrick J.M."/>
            <person name="McKenney K."/>
            <person name="Sutton G.G."/>
            <person name="FitzHugh W."/>
            <person name="Fields C.A."/>
            <person name="Gocayne J.D."/>
            <person name="Scott J.D."/>
            <person name="Shirley R."/>
            <person name="Liu L.-I."/>
            <person name="Glodek A."/>
            <person name="Kelley J.M."/>
            <person name="Weidman J.F."/>
            <person name="Phillips C.A."/>
            <person name="Spriggs T."/>
            <person name="Hedblom E."/>
            <person name="Cotton M.D."/>
            <person name="Utterback T.R."/>
            <person name="Hanna M.C."/>
            <person name="Nguyen D.T."/>
            <person name="Saudek D.M."/>
            <person name="Brandon R.C."/>
            <person name="Fine L.D."/>
            <person name="Fritchman J.L."/>
            <person name="Fuhrmann J.L."/>
            <person name="Geoghagen N.S.M."/>
            <person name="Gnehm C.L."/>
            <person name="McDonald L.A."/>
            <person name="Small K.V."/>
            <person name="Fraser C.M."/>
            <person name="Smith H.O."/>
            <person name="Venter J.C."/>
        </authorList>
    </citation>
    <scope>NUCLEOTIDE SEQUENCE [LARGE SCALE GENOMIC DNA]</scope>
    <source>
        <strain>ATCC 51907 / DSM 11121 / KW20 / Rd</strain>
    </source>
</reference>
<reference key="2">
    <citation type="journal article" date="2000" name="Electrophoresis">
        <title>Two-dimensional map of the proteome of Haemophilus influenzae.</title>
        <authorList>
            <person name="Langen H."/>
            <person name="Takacs B."/>
            <person name="Evers S."/>
            <person name="Berndt P."/>
            <person name="Lahm H.W."/>
            <person name="Wipf B."/>
            <person name="Gray C."/>
            <person name="Fountoulakis M."/>
        </authorList>
    </citation>
    <scope>IDENTIFICATION BY MASS SPECTROMETRY</scope>
    <source>
        <strain>ATCC 51907 / DSM 11121 / KW20 / Rd</strain>
    </source>
</reference>
<gene>
    <name evidence="1" type="primary">bamD</name>
    <name type="ordered locus">HI_0177</name>
</gene>
<accession>P44553</accession>
<dbReference type="EMBL" id="L42023">
    <property type="protein sequence ID" value="AAC21847.1"/>
    <property type="molecule type" value="Genomic_DNA"/>
</dbReference>
<dbReference type="PIR" id="G64144">
    <property type="entry name" value="G64144"/>
</dbReference>
<dbReference type="RefSeq" id="NP_438345.1">
    <property type="nucleotide sequence ID" value="NC_000907.1"/>
</dbReference>
<dbReference type="SMR" id="P44553"/>
<dbReference type="STRING" id="71421.HI_0177"/>
<dbReference type="EnsemblBacteria" id="AAC21847">
    <property type="protein sequence ID" value="AAC21847"/>
    <property type="gene ID" value="HI_0177"/>
</dbReference>
<dbReference type="KEGG" id="hin:HI_0177"/>
<dbReference type="PATRIC" id="fig|71421.8.peg.181"/>
<dbReference type="eggNOG" id="COG4105">
    <property type="taxonomic scope" value="Bacteria"/>
</dbReference>
<dbReference type="HOGENOM" id="CLU_065982_0_2_6"/>
<dbReference type="OrthoDB" id="9779191at2"/>
<dbReference type="PhylomeDB" id="P44553"/>
<dbReference type="BioCyc" id="HINF71421:G1GJ1-187-MONOMER"/>
<dbReference type="Proteomes" id="UP000000579">
    <property type="component" value="Chromosome"/>
</dbReference>
<dbReference type="GO" id="GO:1990063">
    <property type="term" value="C:Bam protein complex"/>
    <property type="evidence" value="ECO:0000318"/>
    <property type="project" value="GO_Central"/>
</dbReference>
<dbReference type="GO" id="GO:0043165">
    <property type="term" value="P:Gram-negative-bacterium-type cell outer membrane assembly"/>
    <property type="evidence" value="ECO:0007669"/>
    <property type="project" value="UniProtKB-UniRule"/>
</dbReference>
<dbReference type="GO" id="GO:0051205">
    <property type="term" value="P:protein insertion into membrane"/>
    <property type="evidence" value="ECO:0000318"/>
    <property type="project" value="GO_Central"/>
</dbReference>
<dbReference type="CDD" id="cd15830">
    <property type="entry name" value="BamD"/>
    <property type="match status" value="1"/>
</dbReference>
<dbReference type="FunFam" id="1.25.40.10:FF:000419">
    <property type="entry name" value="Outer membrane protein assembly factor BamD"/>
    <property type="match status" value="1"/>
</dbReference>
<dbReference type="Gene3D" id="1.25.40.10">
    <property type="entry name" value="Tetratricopeptide repeat domain"/>
    <property type="match status" value="1"/>
</dbReference>
<dbReference type="HAMAP" id="MF_00922">
    <property type="entry name" value="OM_assembly_BamD"/>
    <property type="match status" value="1"/>
</dbReference>
<dbReference type="InterPro" id="IPR017689">
    <property type="entry name" value="BamD"/>
</dbReference>
<dbReference type="InterPro" id="IPR039565">
    <property type="entry name" value="BamD-like"/>
</dbReference>
<dbReference type="InterPro" id="IPR011990">
    <property type="entry name" value="TPR-like_helical_dom_sf"/>
</dbReference>
<dbReference type="NCBIfam" id="TIGR03302">
    <property type="entry name" value="OM_YfiO"/>
    <property type="match status" value="1"/>
</dbReference>
<dbReference type="PANTHER" id="PTHR37423:SF1">
    <property type="entry name" value="OUTER MEMBRANE PROTEIN ASSEMBLY FACTOR BAMD"/>
    <property type="match status" value="1"/>
</dbReference>
<dbReference type="PANTHER" id="PTHR37423">
    <property type="entry name" value="SOLUBLE LYTIC MUREIN TRANSGLYCOSYLASE-RELATED"/>
    <property type="match status" value="1"/>
</dbReference>
<dbReference type="Pfam" id="PF13525">
    <property type="entry name" value="YfiO"/>
    <property type="match status" value="1"/>
</dbReference>
<dbReference type="SUPFAM" id="SSF48452">
    <property type="entry name" value="TPR-like"/>
    <property type="match status" value="1"/>
</dbReference>
<dbReference type="PROSITE" id="PS51257">
    <property type="entry name" value="PROKAR_LIPOPROTEIN"/>
    <property type="match status" value="1"/>
</dbReference>
<comment type="function">
    <text evidence="1">Part of the outer membrane protein assembly complex, which is involved in assembly and insertion of beta-barrel proteins into the outer membrane.</text>
</comment>
<comment type="subunit">
    <text evidence="1">Part of the Bam complex.</text>
</comment>
<comment type="subcellular location">
    <subcellularLocation>
        <location evidence="1">Cell outer membrane</location>
        <topology evidence="1">Lipid-anchor</topology>
    </subcellularLocation>
</comment>
<comment type="similarity">
    <text evidence="1">Belongs to the BamD family.</text>
</comment>
<keyword id="KW-0998">Cell outer membrane</keyword>
<keyword id="KW-0449">Lipoprotein</keyword>
<keyword id="KW-0472">Membrane</keyword>
<keyword id="KW-0564">Palmitate</keyword>
<keyword id="KW-1185">Reference proteome</keyword>
<keyword id="KW-0732">Signal</keyword>
<proteinExistence type="evidence at protein level"/>
<evidence type="ECO:0000255" key="1">
    <source>
        <dbReference type="HAMAP-Rule" id="MF_00922"/>
    </source>
</evidence>
<organism>
    <name type="scientific">Haemophilus influenzae (strain ATCC 51907 / DSM 11121 / KW20 / Rd)</name>
    <dbReference type="NCBI Taxonomy" id="71421"/>
    <lineage>
        <taxon>Bacteria</taxon>
        <taxon>Pseudomonadati</taxon>
        <taxon>Pseudomonadota</taxon>
        <taxon>Gammaproteobacteria</taxon>
        <taxon>Pasteurellales</taxon>
        <taxon>Pasteurellaceae</taxon>
        <taxon>Haemophilus</taxon>
    </lineage>
</organism>
<sequence>MRKIKSLALLAVAALVIGCSSGSKDVEQASVNELYTKGTTSLQEGSYSEAIRYLKATTERFPGSVYQEQAMLDLIYANYKTQDYTQVLLMVDSFLHQFTQSPNQAYAVYMAGLTNAATGDNFIQDFFGIDRATRETTSMRTAFSNFQNLVRVFPNSPYSQDALARMAYIKDALARHELEIAKFYAKRKAWVAVANRVVGMLKQYPDTKATYEGLFLMQEAYEKMGLTALANDTQKIIDANKDKTFAPIEKPNEPDLKVPAVK</sequence>
<feature type="signal peptide" evidence="1">
    <location>
        <begin position="1"/>
        <end position="18"/>
    </location>
</feature>
<feature type="chain" id="PRO_0000036228" description="Outer membrane protein assembly factor BamD">
    <location>
        <begin position="19"/>
        <end position="262"/>
    </location>
</feature>
<feature type="lipid moiety-binding region" description="N-palmitoyl cysteine" evidence="1">
    <location>
        <position position="19"/>
    </location>
</feature>
<feature type="lipid moiety-binding region" description="S-diacylglycerol cysteine" evidence="1">
    <location>
        <position position="19"/>
    </location>
</feature>
<name>BAMD_HAEIN</name>
<protein>
    <recommendedName>
        <fullName evidence="1">Outer membrane protein assembly factor BamD</fullName>
    </recommendedName>
</protein>